<comment type="function">
    <text evidence="1">Activation of RuBisCO (ribulose-1,5-bisohosphate carboxylase/oxygenase; EC 4.1.1.39) involves the ATP-dependent carboxylation of the epsilon-amino group of lysine leading to a carbamate structure.</text>
</comment>
<comment type="induction">
    <text evidence="3">Transcribed in light but much less in the dark in both normal air and 1% CO(2); the nitrogen source has no effect on transcription. Constitutively expressed when grown on fructose. Transcribed separately from rbcL-rbcX-rbcS.</text>
</comment>
<comment type="similarity">
    <text evidence="4">Belongs to the RuBisCO activase family.</text>
</comment>
<proteinExistence type="evidence at transcript level"/>
<accession>Q06721</accession>
<name>RCA_ANASC</name>
<protein>
    <recommendedName>
        <fullName>Ribulose bisphosphate carboxylase/oxygenase activase</fullName>
        <shortName>RA</shortName>
        <shortName>RuBisCO activase</shortName>
    </recommendedName>
</protein>
<reference key="1">
    <citation type="journal article" date="1993" name="Plant Mol. Biol.">
        <title>The Rubisco activase (rca) gene is located downstream from rbcS in Anabaena sp. strain CA and is detected in other Anabaena/Nostoc strains.</title>
        <authorList>
            <person name="Li L.A."/>
            <person name="Gibson J.L."/>
            <person name="Tabita F.R."/>
        </authorList>
    </citation>
    <scope>NUCLEOTIDE SEQUENCE [GENOMIC DNA]</scope>
    <source>
        <strain>CA / ATCC 33047</strain>
    </source>
</reference>
<reference key="2">
    <citation type="journal article" date="1994" name="J. Bacteriol.">
        <title>Transcription control of ribulose bisphosphate carboxylase/oxygenase activase and adjacent genes in Anabaena species.</title>
        <authorList>
            <person name="Li L.A."/>
            <person name="Tabita F.R."/>
        </authorList>
    </citation>
    <scope>INDUCTION BY LIGHT</scope>
    <scope>OPERON STRUCTURE</scope>
    <source>
        <strain>CA / ATCC 33047</strain>
    </source>
</reference>
<organism>
    <name type="scientific">Anabaena sp. (strain CA / ATCC 33047)</name>
    <dbReference type="NCBI Taxonomy" id="52271"/>
    <lineage>
        <taxon>Bacteria</taxon>
        <taxon>Bacillati</taxon>
        <taxon>Cyanobacteriota</taxon>
        <taxon>Cyanophyceae</taxon>
        <taxon>Nostocales</taxon>
        <taxon>Nostocaceae</taxon>
        <taxon>Anabaena</taxon>
    </lineage>
</organism>
<feature type="chain" id="PRO_0000216427" description="Ribulose bisphosphate carboxylase/oxygenase activase">
    <location>
        <begin position="1"/>
        <end position="415"/>
    </location>
</feature>
<feature type="binding site" evidence="2">
    <location>
        <begin position="37"/>
        <end position="44"/>
    </location>
    <ligand>
        <name>ATP</name>
        <dbReference type="ChEBI" id="CHEBI:30616"/>
    </ligand>
</feature>
<dbReference type="EMBL" id="X67942">
    <property type="protein sequence ID" value="CAA48129.1"/>
    <property type="molecule type" value="Genomic_DNA"/>
</dbReference>
<dbReference type="RefSeq" id="WP_066380864.1">
    <property type="nucleotide sequence ID" value="NZ_CAWMSA010000044.1"/>
</dbReference>
<dbReference type="SMR" id="Q06721"/>
<dbReference type="GO" id="GO:0005524">
    <property type="term" value="F:ATP binding"/>
    <property type="evidence" value="ECO:0007669"/>
    <property type="project" value="UniProtKB-KW"/>
</dbReference>
<dbReference type="GO" id="GO:0016887">
    <property type="term" value="F:ATP hydrolysis activity"/>
    <property type="evidence" value="ECO:0007669"/>
    <property type="project" value="InterPro"/>
</dbReference>
<dbReference type="CDD" id="cd00307">
    <property type="entry name" value="RuBisCO_small_like"/>
    <property type="match status" value="1"/>
</dbReference>
<dbReference type="Gene3D" id="1.10.8.1070">
    <property type="match status" value="1"/>
</dbReference>
<dbReference type="Gene3D" id="3.40.50.300">
    <property type="entry name" value="P-loop containing nucleotide triphosphate hydrolases"/>
    <property type="match status" value="1"/>
</dbReference>
<dbReference type="Gene3D" id="3.30.190.10">
    <property type="entry name" value="Ribulose bisphosphate carboxylase, small subunit"/>
    <property type="match status" value="1"/>
</dbReference>
<dbReference type="InterPro" id="IPR003959">
    <property type="entry name" value="ATPase_AAA_core"/>
</dbReference>
<dbReference type="InterPro" id="IPR027417">
    <property type="entry name" value="P-loop_NTPase"/>
</dbReference>
<dbReference type="InterPro" id="IPR044960">
    <property type="entry name" value="RCA-like"/>
</dbReference>
<dbReference type="InterPro" id="IPR048571">
    <property type="entry name" value="RuBisCO_activase_AAA_helical"/>
</dbReference>
<dbReference type="InterPro" id="IPR000894">
    <property type="entry name" value="RuBisCO_ssu_dom"/>
</dbReference>
<dbReference type="InterPro" id="IPR036385">
    <property type="entry name" value="RuBisCO_ssu_sf"/>
</dbReference>
<dbReference type="PANTHER" id="PTHR32429">
    <property type="match status" value="1"/>
</dbReference>
<dbReference type="PANTHER" id="PTHR32429:SF11">
    <property type="entry name" value="RIBULOSE BISPHOSPHATE CARBOXYLASE_OXYGENASE ACTIVASE, CHLOROPLASTIC"/>
    <property type="match status" value="1"/>
</dbReference>
<dbReference type="Pfam" id="PF00004">
    <property type="entry name" value="AAA"/>
    <property type="match status" value="1"/>
</dbReference>
<dbReference type="Pfam" id="PF21228">
    <property type="entry name" value="RuBisCO_activase_AAA_helical"/>
    <property type="match status" value="1"/>
</dbReference>
<dbReference type="Pfam" id="PF00101">
    <property type="entry name" value="RuBisCO_small"/>
    <property type="match status" value="1"/>
</dbReference>
<dbReference type="SMART" id="SM00961">
    <property type="entry name" value="RuBisCO_small"/>
    <property type="match status" value="1"/>
</dbReference>
<dbReference type="SUPFAM" id="SSF52540">
    <property type="entry name" value="P-loop containing nucleoside triphosphate hydrolases"/>
    <property type="match status" value="1"/>
</dbReference>
<dbReference type="SUPFAM" id="SSF55239">
    <property type="entry name" value="RuBisCO, small subunit"/>
    <property type="match status" value="1"/>
</dbReference>
<sequence>MSYYIAPRFLDKLAVHITKNFLNLPGVRVPLILGIHGRKGEGKTFQCELAFEKMGVEVTLISGGELESPDAGDPARLIRLRYRETAELIKVRGKMCVLMINDLDAGAGRFDEGTQYTVNTQLVNATLMNIADNPTDVQLPGSYDSTPLRRVPIIVTGNDFSTLYAPLIRDGRMEKFYWEPHRDEKVGIVGGIFAEDGLSQRDVEKLVDSFPNQSIDFFSALRSRIYDEQIRDFIHQVGYENVSLRVVNSLEGPPAFKKPDFTLSHLIESANFMVAEQKRIETSQLVDEYNRLNRGRSYQPASPVAEIATSQPSPNGVNQPQSASPHISLETQEQIRQILAQGHKITFEHVDNRRFRTGSWQSCGTIHVDAESDAISTLESCLAEYRGEYVRLVGIDPKAKRRVVETIIQRPNGTN</sequence>
<evidence type="ECO:0000250" key="1"/>
<evidence type="ECO:0000255" key="2"/>
<evidence type="ECO:0000269" key="3">
    <source>
    </source>
</evidence>
<evidence type="ECO:0000305" key="4"/>
<gene>
    <name type="primary">rca</name>
</gene>
<keyword id="KW-0067">ATP-binding</keyword>
<keyword id="KW-0547">Nucleotide-binding</keyword>